<comment type="similarity">
    <text evidence="1">Belongs to the glycosyltransferase 25 family.</text>
</comment>
<keyword id="KW-0328">Glycosyltransferase</keyword>
<keyword id="KW-1185">Reference proteome</keyword>
<keyword id="KW-0808">Transferase</keyword>
<evidence type="ECO:0000305" key="1"/>
<organism>
    <name type="scientific">Haemophilus influenzae (strain ATCC 51907 / DSM 11121 / KW20 / Rd)</name>
    <dbReference type="NCBI Taxonomy" id="71421"/>
    <lineage>
        <taxon>Bacteria</taxon>
        <taxon>Pseudomonadati</taxon>
        <taxon>Pseudomonadota</taxon>
        <taxon>Gammaproteobacteria</taxon>
        <taxon>Pasteurellales</taxon>
        <taxon>Pasteurellaceae</taxon>
        <taxon>Haemophilus</taxon>
    </lineage>
</organism>
<proteinExistence type="inferred from homology"/>
<sequence length="282" mass="32482">MKISMIFLPHFLYYTVPTFYLFGLLIMHNAAQHNYVISLTTEQKRRKHITEEFGKQNIPFEFFDAITPDIIEETAKKFNITLDRSPKAKLSDGEIGCALSHIVLWDLALENNLNYINIFEDDIHLGENAKELLEIDYISDDIHVLKLEANGKMFFKQPKSVKCDRNVYPMTVKQSGCAGYTVTAKGAKYLLELVKNKPLDVAVDSLVFEDFLHFKDYKIVQLSPGICVQDFVLHPDNPFESSLQEGRDRVHGNQRKSSILEKIKNEFGRVKIKMFGKQVPFK</sequence>
<gene>
    <name type="ordered locus">HI_0765</name>
</gene>
<name>Y765_HAEIN</name>
<feature type="chain" id="PRO_0000216242" description="Putative glycosyltransferase HI_0765">
    <location>
        <begin position="1"/>
        <end position="282"/>
    </location>
</feature>
<dbReference type="EC" id="2.-.-.-"/>
<dbReference type="EMBL" id="L42023">
    <property type="protein sequence ID" value="AAC22423.1"/>
    <property type="molecule type" value="Genomic_DNA"/>
</dbReference>
<dbReference type="PIR" id="F64091">
    <property type="entry name" value="F64091"/>
</dbReference>
<dbReference type="RefSeq" id="NP_438924.2">
    <property type="nucleotide sequence ID" value="NC_000907.1"/>
</dbReference>
<dbReference type="SMR" id="Q57125"/>
<dbReference type="STRING" id="71421.HI_0765"/>
<dbReference type="CAZy" id="GT25">
    <property type="family name" value="Glycosyltransferase Family 25"/>
</dbReference>
<dbReference type="EnsemblBacteria" id="AAC22423">
    <property type="protein sequence ID" value="AAC22423"/>
    <property type="gene ID" value="HI_0765"/>
</dbReference>
<dbReference type="KEGG" id="hin:HI_0765"/>
<dbReference type="PATRIC" id="fig|71421.8.peg.804"/>
<dbReference type="eggNOG" id="COG3306">
    <property type="taxonomic scope" value="Bacteria"/>
</dbReference>
<dbReference type="HOGENOM" id="CLU_071269_2_0_6"/>
<dbReference type="OrthoDB" id="9816113at2"/>
<dbReference type="PhylomeDB" id="Q57125"/>
<dbReference type="Proteomes" id="UP000000579">
    <property type="component" value="Chromosome"/>
</dbReference>
<dbReference type="GO" id="GO:0016757">
    <property type="term" value="F:glycosyltransferase activity"/>
    <property type="evidence" value="ECO:0007669"/>
    <property type="project" value="UniProtKB-KW"/>
</dbReference>
<dbReference type="CDD" id="cd06532">
    <property type="entry name" value="Glyco_transf_25"/>
    <property type="match status" value="1"/>
</dbReference>
<dbReference type="InterPro" id="IPR002654">
    <property type="entry name" value="Glyco_trans_25"/>
</dbReference>
<dbReference type="Pfam" id="PF01755">
    <property type="entry name" value="Glyco_transf_25"/>
    <property type="match status" value="1"/>
</dbReference>
<reference key="1">
    <citation type="journal article" date="1995" name="Science">
        <title>Whole-genome random sequencing and assembly of Haemophilus influenzae Rd.</title>
        <authorList>
            <person name="Fleischmann R.D."/>
            <person name="Adams M.D."/>
            <person name="White O."/>
            <person name="Clayton R.A."/>
            <person name="Kirkness E.F."/>
            <person name="Kerlavage A.R."/>
            <person name="Bult C.J."/>
            <person name="Tomb J.-F."/>
            <person name="Dougherty B.A."/>
            <person name="Merrick J.M."/>
            <person name="McKenney K."/>
            <person name="Sutton G.G."/>
            <person name="FitzHugh W."/>
            <person name="Fields C.A."/>
            <person name="Gocayne J.D."/>
            <person name="Scott J.D."/>
            <person name="Shirley R."/>
            <person name="Liu L.-I."/>
            <person name="Glodek A."/>
            <person name="Kelley J.M."/>
            <person name="Weidman J.F."/>
            <person name="Phillips C.A."/>
            <person name="Spriggs T."/>
            <person name="Hedblom E."/>
            <person name="Cotton M.D."/>
            <person name="Utterback T.R."/>
            <person name="Hanna M.C."/>
            <person name="Nguyen D.T."/>
            <person name="Saudek D.M."/>
            <person name="Brandon R.C."/>
            <person name="Fine L.D."/>
            <person name="Fritchman J.L."/>
            <person name="Fuhrmann J.L."/>
            <person name="Geoghagen N.S.M."/>
            <person name="Gnehm C.L."/>
            <person name="McDonald L.A."/>
            <person name="Small K.V."/>
            <person name="Fraser C.M."/>
            <person name="Smith H.O."/>
            <person name="Venter J.C."/>
        </authorList>
    </citation>
    <scope>NUCLEOTIDE SEQUENCE [LARGE SCALE GENOMIC DNA]</scope>
    <source>
        <strain>ATCC 51907 / DSM 11121 / KW20 / Rd</strain>
    </source>
</reference>
<protein>
    <recommendedName>
        <fullName>Putative glycosyltransferase HI_0765</fullName>
        <ecNumber>2.-.-.-</ecNumber>
    </recommendedName>
</protein>
<accession>Q57125</accession>
<accession>O05033</accession>